<proteinExistence type="inferred from homology"/>
<accession>A9WDM8</accession>
<organism>
    <name type="scientific">Chloroflexus aurantiacus (strain ATCC 29366 / DSM 635 / J-10-fl)</name>
    <dbReference type="NCBI Taxonomy" id="324602"/>
    <lineage>
        <taxon>Bacteria</taxon>
        <taxon>Bacillati</taxon>
        <taxon>Chloroflexota</taxon>
        <taxon>Chloroflexia</taxon>
        <taxon>Chloroflexales</taxon>
        <taxon>Chloroflexineae</taxon>
        <taxon>Chloroflexaceae</taxon>
        <taxon>Chloroflexus</taxon>
    </lineage>
</organism>
<evidence type="ECO:0000255" key="1">
    <source>
        <dbReference type="HAMAP-Rule" id="MF_00382"/>
    </source>
</evidence>
<evidence type="ECO:0000305" key="2"/>
<sequence>MARVKRGIMVRKRHKKLLEQAKGYRGARSRHYKVAHEAVMHALADAYRDRRRRKRDFRRLWIMRINAAARLHGTTYSRLINSLKQANIEIDRKMLADLAVRDPQAFARIVEQAQAAVTA</sequence>
<dbReference type="EMBL" id="CP000909">
    <property type="protein sequence ID" value="ABY33634.1"/>
    <property type="molecule type" value="Genomic_DNA"/>
</dbReference>
<dbReference type="RefSeq" id="WP_012256290.1">
    <property type="nucleotide sequence ID" value="NC_010175.1"/>
</dbReference>
<dbReference type="RefSeq" id="YP_001634023.1">
    <property type="nucleotide sequence ID" value="NC_010175.1"/>
</dbReference>
<dbReference type="SMR" id="A9WDM8"/>
<dbReference type="FunCoup" id="A9WDM8">
    <property type="interactions" value="447"/>
</dbReference>
<dbReference type="STRING" id="324602.Caur_0384"/>
<dbReference type="EnsemblBacteria" id="ABY33634">
    <property type="protein sequence ID" value="ABY33634"/>
    <property type="gene ID" value="Caur_0384"/>
</dbReference>
<dbReference type="KEGG" id="cau:Caur_0384"/>
<dbReference type="PATRIC" id="fig|324602.8.peg.436"/>
<dbReference type="eggNOG" id="COG0292">
    <property type="taxonomic scope" value="Bacteria"/>
</dbReference>
<dbReference type="HOGENOM" id="CLU_123265_0_1_0"/>
<dbReference type="InParanoid" id="A9WDM8"/>
<dbReference type="Proteomes" id="UP000002008">
    <property type="component" value="Chromosome"/>
</dbReference>
<dbReference type="GO" id="GO:0022625">
    <property type="term" value="C:cytosolic large ribosomal subunit"/>
    <property type="evidence" value="ECO:0000318"/>
    <property type="project" value="GO_Central"/>
</dbReference>
<dbReference type="GO" id="GO:0019843">
    <property type="term" value="F:rRNA binding"/>
    <property type="evidence" value="ECO:0007669"/>
    <property type="project" value="UniProtKB-UniRule"/>
</dbReference>
<dbReference type="GO" id="GO:0003735">
    <property type="term" value="F:structural constituent of ribosome"/>
    <property type="evidence" value="ECO:0000318"/>
    <property type="project" value="GO_Central"/>
</dbReference>
<dbReference type="GO" id="GO:0000027">
    <property type="term" value="P:ribosomal large subunit assembly"/>
    <property type="evidence" value="ECO:0007669"/>
    <property type="project" value="UniProtKB-UniRule"/>
</dbReference>
<dbReference type="GO" id="GO:0006412">
    <property type="term" value="P:translation"/>
    <property type="evidence" value="ECO:0007669"/>
    <property type="project" value="InterPro"/>
</dbReference>
<dbReference type="CDD" id="cd07026">
    <property type="entry name" value="Ribosomal_L20"/>
    <property type="match status" value="1"/>
</dbReference>
<dbReference type="FunFam" id="1.10.1900.20:FF:000001">
    <property type="entry name" value="50S ribosomal protein L20"/>
    <property type="match status" value="1"/>
</dbReference>
<dbReference type="Gene3D" id="6.10.160.10">
    <property type="match status" value="1"/>
</dbReference>
<dbReference type="Gene3D" id="1.10.1900.20">
    <property type="entry name" value="Ribosomal protein L20"/>
    <property type="match status" value="1"/>
</dbReference>
<dbReference type="HAMAP" id="MF_00382">
    <property type="entry name" value="Ribosomal_bL20"/>
    <property type="match status" value="1"/>
</dbReference>
<dbReference type="InterPro" id="IPR005813">
    <property type="entry name" value="Ribosomal_bL20"/>
</dbReference>
<dbReference type="InterPro" id="IPR049946">
    <property type="entry name" value="RIBOSOMAL_L20_CS"/>
</dbReference>
<dbReference type="InterPro" id="IPR035566">
    <property type="entry name" value="Ribosomal_protein_bL20_C"/>
</dbReference>
<dbReference type="NCBIfam" id="TIGR01032">
    <property type="entry name" value="rplT_bact"/>
    <property type="match status" value="1"/>
</dbReference>
<dbReference type="PANTHER" id="PTHR10986">
    <property type="entry name" value="39S RIBOSOMAL PROTEIN L20"/>
    <property type="match status" value="1"/>
</dbReference>
<dbReference type="Pfam" id="PF00453">
    <property type="entry name" value="Ribosomal_L20"/>
    <property type="match status" value="1"/>
</dbReference>
<dbReference type="PRINTS" id="PR00062">
    <property type="entry name" value="RIBOSOMALL20"/>
</dbReference>
<dbReference type="SUPFAM" id="SSF74731">
    <property type="entry name" value="Ribosomal protein L20"/>
    <property type="match status" value="1"/>
</dbReference>
<dbReference type="PROSITE" id="PS00937">
    <property type="entry name" value="RIBOSOMAL_L20"/>
    <property type="match status" value="1"/>
</dbReference>
<reference key="1">
    <citation type="journal article" date="2011" name="BMC Genomics">
        <title>Complete genome sequence of the filamentous anoxygenic phototrophic bacterium Chloroflexus aurantiacus.</title>
        <authorList>
            <person name="Tang K.H."/>
            <person name="Barry K."/>
            <person name="Chertkov O."/>
            <person name="Dalin E."/>
            <person name="Han C.S."/>
            <person name="Hauser L.J."/>
            <person name="Honchak B.M."/>
            <person name="Karbach L.E."/>
            <person name="Land M.L."/>
            <person name="Lapidus A."/>
            <person name="Larimer F.W."/>
            <person name="Mikhailova N."/>
            <person name="Pitluck S."/>
            <person name="Pierson B.K."/>
            <person name="Blankenship R.E."/>
        </authorList>
    </citation>
    <scope>NUCLEOTIDE SEQUENCE [LARGE SCALE GENOMIC DNA]</scope>
    <source>
        <strain>ATCC 29366 / DSM 635 / J-10-fl</strain>
    </source>
</reference>
<name>RL20_CHLAA</name>
<protein>
    <recommendedName>
        <fullName evidence="1">Large ribosomal subunit protein bL20</fullName>
    </recommendedName>
    <alternativeName>
        <fullName evidence="2">50S ribosomal protein L20</fullName>
    </alternativeName>
</protein>
<keyword id="KW-1185">Reference proteome</keyword>
<keyword id="KW-0687">Ribonucleoprotein</keyword>
<keyword id="KW-0689">Ribosomal protein</keyword>
<keyword id="KW-0694">RNA-binding</keyword>
<keyword id="KW-0699">rRNA-binding</keyword>
<feature type="chain" id="PRO_1000080062" description="Large ribosomal subunit protein bL20">
    <location>
        <begin position="1"/>
        <end position="119"/>
    </location>
</feature>
<gene>
    <name evidence="1" type="primary">rplT</name>
    <name type="ordered locus">Caur_0384</name>
</gene>
<comment type="function">
    <text evidence="1">Binds directly to 23S ribosomal RNA and is necessary for the in vitro assembly process of the 50S ribosomal subunit. It is not involved in the protein synthesizing functions of that subunit.</text>
</comment>
<comment type="similarity">
    <text evidence="1">Belongs to the bacterial ribosomal protein bL20 family.</text>
</comment>